<feature type="chain" id="PRO_0000441561" description="Genome polyprotein">
    <location>
        <begin position="1"/>
        <end position="3434"/>
    </location>
</feature>
<feature type="chain" id="PRO_0000441562" description="Capsid protein C" evidence="2">
    <location>
        <begin position="1"/>
        <end position="104"/>
    </location>
</feature>
<feature type="propeptide" id="PRO_0000441563" description="ER anchor for the capsid protein C, removed in mature form by serine protease NS3" evidence="2">
    <location>
        <begin position="105"/>
        <end position="126"/>
    </location>
</feature>
<feature type="chain" id="PRO_0000441564" description="Protein prM" evidence="2">
    <location>
        <begin position="127"/>
        <end position="293"/>
    </location>
</feature>
<feature type="chain" id="PRO_0000441565" description="Peptide pr" evidence="2">
    <location>
        <begin position="127"/>
        <end position="218"/>
    </location>
</feature>
<feature type="chain" id="PRO_0000441566" description="Small envelope protein M" evidence="2">
    <location>
        <begin position="219"/>
        <end position="293"/>
    </location>
</feature>
<feature type="chain" id="PRO_0000441567" description="Envelope protein E" evidence="2">
    <location>
        <begin position="294"/>
        <end position="793"/>
    </location>
</feature>
<feature type="chain" id="PRO_0000441568" description="Non-structural protein 1" evidence="2">
    <location>
        <begin position="794"/>
        <end position="1145"/>
    </location>
</feature>
<feature type="chain" id="PRO_0000441569" description="Non-structural protein 2A" evidence="2">
    <location>
        <begin position="1146"/>
        <end position="1372"/>
    </location>
</feature>
<feature type="chain" id="PRO_0000441570" description="Serine protease subunit NS2B" evidence="2">
    <location>
        <begin position="1373"/>
        <end position="1503"/>
    </location>
</feature>
<feature type="chain" id="PRO_0000441571" description="Serine protease NS3" evidence="2">
    <location>
        <begin position="1504"/>
        <end position="2122"/>
    </location>
</feature>
<feature type="chain" id="PRO_0000441572" description="Non-structural protein 4A" evidence="2">
    <location>
        <begin position="2123"/>
        <end position="2248"/>
    </location>
</feature>
<feature type="peptide" id="PRO_0000441573" description="Peptide 2k" evidence="2">
    <location>
        <begin position="2249"/>
        <end position="2271"/>
    </location>
</feature>
<feature type="chain" id="PRO_0000441574" description="Non-structural protein 4B" evidence="2">
    <location>
        <begin position="2272"/>
        <end position="2529"/>
    </location>
</feature>
<feature type="chain" id="PRO_0000441575" description="RNA-directed RNA polymerase NS5" evidence="2">
    <location>
        <begin position="2530"/>
        <end position="3434"/>
    </location>
</feature>
<feature type="topological domain" description="Cytoplasmic" evidence="11">
    <location>
        <begin position="1"/>
        <end position="106"/>
    </location>
</feature>
<feature type="transmembrane region" description="Helical" evidence="11">
    <location>
        <begin position="107"/>
        <end position="126"/>
    </location>
</feature>
<feature type="topological domain" description="Extracellular" evidence="11">
    <location>
        <begin position="127"/>
        <end position="248"/>
    </location>
</feature>
<feature type="transmembrane region" description="Helical" evidence="11">
    <location>
        <begin position="249"/>
        <end position="273"/>
    </location>
</feature>
<feature type="topological domain" description="Cytoplasmic" evidence="11">
    <location>
        <begin position="274"/>
        <end position="278"/>
    </location>
</feature>
<feature type="transmembrane region" description="Helical" evidence="19">
    <location>
        <begin position="279"/>
        <end position="293"/>
    </location>
</feature>
<feature type="topological domain" description="Extracellular" evidence="11">
    <location>
        <begin position="294"/>
        <end position="745"/>
    </location>
</feature>
<feature type="transmembrane region" description="Helical" evidence="11">
    <location>
        <begin position="746"/>
        <end position="766"/>
    </location>
</feature>
<feature type="topological domain" description="Cytoplasmic" evidence="11">
    <location>
        <begin position="767"/>
        <end position="772"/>
    </location>
</feature>
<feature type="transmembrane region" description="Helical" evidence="11">
    <location>
        <begin position="773"/>
        <end position="793"/>
    </location>
</feature>
<feature type="topological domain" description="Extracellular" evidence="11">
    <location>
        <begin position="794"/>
        <end position="1218"/>
    </location>
</feature>
<feature type="transmembrane region" description="Helical" evidence="11">
    <location>
        <begin position="1219"/>
        <end position="1239"/>
    </location>
</feature>
<feature type="topological domain" description="Cytoplasmic" evidence="11">
    <location>
        <begin position="1240"/>
        <end position="1249"/>
    </location>
</feature>
<feature type="transmembrane region" description="Helical" evidence="11">
    <location>
        <begin position="1250"/>
        <end position="1270"/>
    </location>
</feature>
<feature type="topological domain" description="Lumenal" evidence="11">
    <location>
        <begin position="1271"/>
        <end position="1286"/>
    </location>
</feature>
<feature type="transmembrane region" description="Helical" evidence="11">
    <location>
        <begin position="1287"/>
        <end position="1307"/>
    </location>
</feature>
<feature type="topological domain" description="Cytoplasmic" evidence="11">
    <location>
        <position position="1308"/>
    </location>
</feature>
<feature type="transmembrane region" description="Helical" evidence="11">
    <location>
        <begin position="1309"/>
        <end position="1329"/>
    </location>
</feature>
<feature type="topological domain" description="Lumenal" evidence="11">
    <location>
        <begin position="1330"/>
        <end position="1340"/>
    </location>
</feature>
<feature type="transmembrane region" description="Helical" evidence="11">
    <location>
        <begin position="1341"/>
        <end position="1361"/>
    </location>
</feature>
<feature type="topological domain" description="Cytoplasmic" evidence="11">
    <location>
        <begin position="1362"/>
        <end position="1373"/>
    </location>
</feature>
<feature type="transmembrane region" description="Helical" evidence="11">
    <location>
        <begin position="1374"/>
        <end position="1394"/>
    </location>
</feature>
<feature type="topological domain" description="Lumenal" evidence="11">
    <location>
        <begin position="1395"/>
        <end position="1397"/>
    </location>
</feature>
<feature type="transmembrane region" description="Helical" evidence="11">
    <location>
        <begin position="1398"/>
        <end position="1418"/>
    </location>
</feature>
<feature type="topological domain" description="Cytoplasmic" evidence="11">
    <location>
        <begin position="1419"/>
        <end position="1475"/>
    </location>
</feature>
<feature type="intramembrane region" description="Helical" evidence="11">
    <location>
        <begin position="1476"/>
        <end position="1496"/>
    </location>
</feature>
<feature type="topological domain" description="Cytoplasmic" evidence="11">
    <location>
        <begin position="1497"/>
        <end position="2173"/>
    </location>
</feature>
<feature type="transmembrane region" description="Helical" evidence="11">
    <location>
        <begin position="2174"/>
        <end position="2194"/>
    </location>
</feature>
<feature type="topological domain" description="Lumenal" evidence="11">
    <location>
        <begin position="2195"/>
        <end position="2198"/>
    </location>
</feature>
<feature type="intramembrane region" description="Helical" evidence="11">
    <location>
        <begin position="2199"/>
        <end position="2219"/>
    </location>
</feature>
<feature type="topological domain" description="Lumenal" evidence="11">
    <location>
        <position position="2220"/>
    </location>
</feature>
<feature type="transmembrane region" description="Helical" evidence="11">
    <location>
        <begin position="2221"/>
        <end position="2241"/>
    </location>
</feature>
<feature type="topological domain" description="Cytoplasmic" evidence="11">
    <location>
        <begin position="2242"/>
        <end position="2256"/>
    </location>
</feature>
<feature type="transmembrane region" description="Helical; Note=Signal for NS4B" evidence="11">
    <location>
        <begin position="2257"/>
        <end position="2277"/>
    </location>
</feature>
<feature type="topological domain" description="Lumenal" evidence="11">
    <location>
        <begin position="2278"/>
        <end position="2313"/>
    </location>
</feature>
<feature type="intramembrane region" description="Helical" evidence="11">
    <location>
        <begin position="2314"/>
        <end position="2334"/>
    </location>
</feature>
<feature type="topological domain" description="Lumenal" evidence="11">
    <location>
        <begin position="2335"/>
        <end position="2368"/>
    </location>
</feature>
<feature type="transmembrane region" description="Helical" evidence="11">
    <location>
        <begin position="2369"/>
        <end position="2389"/>
    </location>
</feature>
<feature type="topological domain" description="Cytoplasmic" evidence="11">
    <location>
        <begin position="2390"/>
        <end position="2446"/>
    </location>
</feature>
<feature type="transmembrane region" description="Helical" evidence="11">
    <location>
        <begin position="2447"/>
        <end position="2467"/>
    </location>
</feature>
<feature type="topological domain" description="Lumenal" evidence="11">
    <location>
        <begin position="2468"/>
        <end position="2471"/>
    </location>
</feature>
<feature type="transmembrane region" description="Helical" evidence="11">
    <location>
        <begin position="2472"/>
        <end position="2492"/>
    </location>
</feature>
<feature type="topological domain" description="Cytoplasmic" evidence="11">
    <location>
        <begin position="2493"/>
        <end position="3434"/>
    </location>
</feature>
<feature type="domain" description="Peptidase S7" evidence="16">
    <location>
        <begin position="1504"/>
        <end position="1681"/>
    </location>
</feature>
<feature type="domain" description="Helicase ATP-binding" evidence="13">
    <location>
        <begin position="1684"/>
        <end position="1840"/>
    </location>
</feature>
<feature type="domain" description="Helicase C-terminal" evidence="14">
    <location>
        <begin position="1851"/>
        <end position="2016"/>
    </location>
</feature>
<feature type="domain" description="mRNA cap 0-1 NS5-type MT" evidence="17">
    <location>
        <begin position="2530"/>
        <end position="2795"/>
    </location>
</feature>
<feature type="domain" description="RdRp catalytic" evidence="12">
    <location>
        <begin position="3059"/>
        <end position="3211"/>
    </location>
</feature>
<feature type="region of interest" description="Interaction with host EXOC1" evidence="2">
    <location>
        <begin position="2"/>
        <end position="15"/>
    </location>
</feature>
<feature type="region of interest" description="Hydrophobic; homodimerization of capsid protein C" evidence="7">
    <location>
        <begin position="37"/>
        <end position="72"/>
    </location>
</feature>
<feature type="region of interest" description="Fusion peptide" evidence="4">
    <location>
        <begin position="391"/>
        <end position="404"/>
    </location>
</feature>
<feature type="region of interest" description="Interacts with and activates NS3 protease" evidence="15">
    <location>
        <begin position="1426"/>
        <end position="1465"/>
    </location>
</feature>
<feature type="region of interest" description="Important for RNA-binding" evidence="5">
    <location>
        <begin position="1688"/>
        <end position="1691"/>
    </location>
</feature>
<feature type="region of interest" description="Disordered" evidence="18">
    <location>
        <begin position="1956"/>
        <end position="1980"/>
    </location>
</feature>
<feature type="region of interest" description="Regulates the ATPase activity of NS3 helicase" evidence="10">
    <location>
        <begin position="2167"/>
        <end position="2171"/>
    </location>
</feature>
<feature type="region of interest" description="Disordered" evidence="18">
    <location>
        <begin position="2567"/>
        <end position="2587"/>
    </location>
</feature>
<feature type="short sequence motif" description="DEAH box" evidence="13">
    <location>
        <begin position="1788"/>
        <end position="1791"/>
    </location>
</feature>
<feature type="active site" description="Charge relay system; for serine protease NS3 activity" evidence="16">
    <location>
        <position position="1554"/>
    </location>
</feature>
<feature type="active site" description="Charge relay system; for serine protease NS3 activity" evidence="16">
    <location>
        <position position="1578"/>
    </location>
</feature>
<feature type="active site" description="Charge relay system; for serine protease NS3 activity" evidence="16">
    <location>
        <position position="1638"/>
    </location>
</feature>
<feature type="active site" description="For 2'-O-MTase activity" evidence="9">
    <location>
        <position position="2590"/>
    </location>
</feature>
<feature type="active site" description="For 2'-O-MTase activity" evidence="9">
    <location>
        <position position="2675"/>
    </location>
</feature>
<feature type="active site" description="For 2'-O-MTase activity" evidence="9">
    <location>
        <position position="2711"/>
    </location>
</feature>
<feature type="active site" description="For 2'-O-MTase activity" evidence="9">
    <location>
        <position position="2747"/>
    </location>
</feature>
<feature type="binding site" evidence="13">
    <location>
        <begin position="1697"/>
        <end position="1704"/>
    </location>
    <ligand>
        <name>ATP</name>
        <dbReference type="ChEBI" id="CHEBI:30616"/>
    </ligand>
</feature>
<feature type="binding site" evidence="17">
    <location>
        <position position="2585"/>
    </location>
    <ligand>
        <name>S-adenosyl-L-methionine</name>
        <dbReference type="ChEBI" id="CHEBI:59789"/>
    </ligand>
</feature>
<feature type="binding site" evidence="17">
    <location>
        <position position="2615"/>
    </location>
    <ligand>
        <name>S-adenosyl-L-methionine</name>
        <dbReference type="ChEBI" id="CHEBI:59789"/>
    </ligand>
</feature>
<feature type="binding site" evidence="17">
    <location>
        <position position="2616"/>
    </location>
    <ligand>
        <name>S-adenosyl-L-methionine</name>
        <dbReference type="ChEBI" id="CHEBI:59789"/>
    </ligand>
</feature>
<feature type="binding site" evidence="17">
    <location>
        <position position="2633"/>
    </location>
    <ligand>
        <name>S-adenosyl-L-methionine</name>
        <dbReference type="ChEBI" id="CHEBI:59789"/>
    </ligand>
</feature>
<feature type="binding site" evidence="17">
    <location>
        <position position="2634"/>
    </location>
    <ligand>
        <name>S-adenosyl-L-methionine</name>
        <dbReference type="ChEBI" id="CHEBI:59789"/>
    </ligand>
</feature>
<feature type="binding site" evidence="17">
    <location>
        <position position="2660"/>
    </location>
    <ligand>
        <name>S-adenosyl-L-methionine</name>
        <dbReference type="ChEBI" id="CHEBI:59789"/>
    </ligand>
</feature>
<feature type="binding site" evidence="17">
    <location>
        <position position="2661"/>
    </location>
    <ligand>
        <name>S-adenosyl-L-methionine</name>
        <dbReference type="ChEBI" id="CHEBI:59789"/>
    </ligand>
</feature>
<feature type="binding site" evidence="17">
    <location>
        <position position="2676"/>
    </location>
    <ligand>
        <name>S-adenosyl-L-methionine</name>
        <dbReference type="ChEBI" id="CHEBI:59789"/>
    </ligand>
</feature>
<feature type="binding site" evidence="17">
    <location>
        <position position="2749"/>
    </location>
    <ligand>
        <name>S-adenosyl-L-methionine</name>
        <dbReference type="ChEBI" id="CHEBI:59789"/>
    </ligand>
</feature>
<feature type="binding site" evidence="3">
    <location>
        <position position="2969"/>
    </location>
    <ligand>
        <name>Zn(2+)</name>
        <dbReference type="ChEBI" id="CHEBI:29105"/>
        <label>1</label>
    </ligand>
</feature>
<feature type="binding site" evidence="3">
    <location>
        <position position="2973"/>
    </location>
    <ligand>
        <name>Zn(2+)</name>
        <dbReference type="ChEBI" id="CHEBI:29105"/>
        <label>1</label>
    </ligand>
</feature>
<feature type="binding site" evidence="3">
    <location>
        <position position="2978"/>
    </location>
    <ligand>
        <name>Zn(2+)</name>
        <dbReference type="ChEBI" id="CHEBI:29105"/>
        <label>1</label>
    </ligand>
</feature>
<feature type="binding site" evidence="3">
    <location>
        <position position="2981"/>
    </location>
    <ligand>
        <name>Zn(2+)</name>
        <dbReference type="ChEBI" id="CHEBI:29105"/>
        <label>1</label>
    </ligand>
</feature>
<feature type="binding site" evidence="3">
    <location>
        <position position="3246"/>
    </location>
    <ligand>
        <name>Zn(2+)</name>
        <dbReference type="ChEBI" id="CHEBI:29105"/>
        <label>2</label>
    </ligand>
</feature>
<feature type="binding site" evidence="3">
    <location>
        <position position="3262"/>
    </location>
    <ligand>
        <name>Zn(2+)</name>
        <dbReference type="ChEBI" id="CHEBI:29105"/>
        <label>2</label>
    </ligand>
</feature>
<feature type="binding site" evidence="3">
    <location>
        <position position="3381"/>
    </location>
    <ligand>
        <name>Zn(2+)</name>
        <dbReference type="ChEBI" id="CHEBI:29105"/>
        <label>2</label>
    </ligand>
</feature>
<feature type="site" description="Cleavage; by viral protease NS3" evidence="2">
    <location>
        <begin position="104"/>
        <end position="105"/>
    </location>
</feature>
<feature type="site" description="Cleavage; by host signal peptidase" evidence="2">
    <location>
        <begin position="126"/>
        <end position="127"/>
    </location>
</feature>
<feature type="site" description="Cleavage; by host furin" evidence="2">
    <location>
        <begin position="218"/>
        <end position="219"/>
    </location>
</feature>
<feature type="site" description="Cleavage; by host signal peptidase" evidence="2">
    <location>
        <begin position="293"/>
        <end position="294"/>
    </location>
</feature>
<feature type="site" description="Cleavage; by host signal peptidase" evidence="2">
    <location>
        <begin position="793"/>
        <end position="794"/>
    </location>
</feature>
<feature type="site" description="Cleavage; by host" evidence="2">
    <location>
        <begin position="1145"/>
        <end position="1146"/>
    </location>
</feature>
<feature type="site" description="Cleavage; by viral protease NS3" evidence="2">
    <location>
        <begin position="1372"/>
        <end position="1373"/>
    </location>
</feature>
<feature type="site" description="Cleavage; by autolysis" evidence="2">
    <location>
        <begin position="1503"/>
        <end position="1504"/>
    </location>
</feature>
<feature type="site" description="Involved in NS3 ATPase and RTPase activities" evidence="3">
    <location>
        <position position="1961"/>
    </location>
</feature>
<feature type="site" description="Involved in NS3 ATPase and RTPase activities" evidence="3">
    <location>
        <position position="1964"/>
    </location>
</feature>
<feature type="site" description="Cleavage; by autolysis" evidence="2">
    <location>
        <begin position="2122"/>
        <end position="2123"/>
    </location>
</feature>
<feature type="site" description="Cleavage; by viral protease NS3" evidence="2">
    <location>
        <begin position="2248"/>
        <end position="2249"/>
    </location>
</feature>
<feature type="site" description="Cleavage; by host signal peptidase" evidence="2">
    <location>
        <begin position="2271"/>
        <end position="2272"/>
    </location>
</feature>
<feature type="site" description="Cleavage; by viral protease NS3" evidence="2">
    <location>
        <begin position="2529"/>
        <end position="2530"/>
    </location>
</feature>
<feature type="site" description="mRNA cap binding" evidence="17">
    <location>
        <position position="2542"/>
    </location>
</feature>
<feature type="site" description="mRNA cap binding; via carbonyl oxygen" evidence="17">
    <location>
        <position position="2545"/>
    </location>
</feature>
<feature type="site" description="mRNA cap binding" evidence="17">
    <location>
        <position position="2546"/>
    </location>
</feature>
<feature type="site" description="mRNA cap binding; via carbonyl oxygen" evidence="17">
    <location>
        <position position="2548"/>
    </location>
</feature>
<feature type="site" description="mRNA cap binding" evidence="17">
    <location>
        <position position="2553"/>
    </location>
</feature>
<feature type="site" description="mRNA cap binding" evidence="17">
    <location>
        <position position="2557"/>
    </location>
</feature>
<feature type="site" description="Essential for 2'-O-methyltransferase activity" evidence="17">
    <location>
        <position position="2590"/>
    </location>
</feature>
<feature type="site" description="Essential for 2'-O-methyltransferase and N-7 methyltransferase activity" evidence="17">
    <location>
        <position position="2675"/>
    </location>
</feature>
<feature type="site" description="mRNA cap binding" evidence="17">
    <location>
        <position position="2679"/>
    </location>
</feature>
<feature type="site" description="Essential for 2'-O-methyltransferase activity" evidence="17">
    <location>
        <position position="2711"/>
    </location>
</feature>
<feature type="site" description="mRNA cap binding" evidence="17">
    <location>
        <position position="2742"/>
    </location>
</feature>
<feature type="site" description="mRNA cap binding" evidence="17">
    <location>
        <position position="2744"/>
    </location>
</feature>
<feature type="site" description="Essential for 2'-O-methyltransferase activity" evidence="17">
    <location>
        <position position="2747"/>
    </location>
</feature>
<feature type="modified residue" description="N6-acetyllysine; by host" evidence="8">
    <location>
        <position position="1892"/>
    </location>
</feature>
<feature type="modified residue" description="Phosphoserine" evidence="1">
    <location>
        <position position="2585"/>
    </location>
</feature>
<feature type="glycosylation site" description="N-linked (GlcNAc...) asparagine; by host" evidence="3">
    <location>
        <position position="141"/>
    </location>
</feature>
<feature type="glycosylation site" description="N-linked (GlcNAc...) asparagine; by host" evidence="10">
    <location>
        <position position="923"/>
    </location>
</feature>
<feature type="glycosylation site" description="N-linked (GlcNAc...) asparagine; by host" evidence="10">
    <location>
        <position position="968"/>
    </location>
</feature>
<feature type="glycosylation site" description="N-linked (GlcNAc...) asparagine; by host" evidence="10">
    <location>
        <position position="1000"/>
    </location>
</feature>
<feature type="disulfide bond" evidence="2">
    <location>
        <begin position="296"/>
        <end position="323"/>
    </location>
</feature>
<feature type="disulfide bond" evidence="6">
    <location>
        <begin position="353"/>
        <end position="414"/>
    </location>
</feature>
<feature type="disulfide bond" evidence="2">
    <location>
        <begin position="353"/>
        <end position="409"/>
    </location>
</feature>
<feature type="disulfide bond" evidence="2">
    <location>
        <begin position="367"/>
        <end position="398"/>
    </location>
</feature>
<feature type="disulfide bond" evidence="2">
    <location>
        <begin position="385"/>
        <end position="414"/>
    </location>
</feature>
<feature type="disulfide bond" evidence="6">
    <location>
        <begin position="385"/>
        <end position="409"/>
    </location>
</feature>
<feature type="disulfide bond" evidence="2">
    <location>
        <begin position="483"/>
        <end position="580"/>
    </location>
</feature>
<feature type="disulfide bond" evidence="2">
    <location>
        <begin position="597"/>
        <end position="628"/>
    </location>
</feature>
<feature type="disulfide bond" evidence="6">
    <location>
        <begin position="797"/>
        <end position="808"/>
    </location>
</feature>
<feature type="disulfide bond" evidence="6">
    <location>
        <begin position="848"/>
        <end position="936"/>
    </location>
</feature>
<feature type="disulfide bond" evidence="6">
    <location>
        <begin position="972"/>
        <end position="1016"/>
    </location>
</feature>
<feature type="disulfide bond" evidence="6">
    <location>
        <begin position="1073"/>
        <end position="1122"/>
    </location>
</feature>
<feature type="disulfide bond" evidence="6">
    <location>
        <begin position="1084"/>
        <end position="1106"/>
    </location>
</feature>
<feature type="disulfide bond" evidence="10">
    <location>
        <begin position="1084"/>
        <end position="1105"/>
    </location>
</feature>
<feature type="disulfide bond" evidence="6">
    <location>
        <begin position="1105"/>
        <end position="1109"/>
    </location>
</feature>
<feature type="disulfide bond" evidence="10">
    <location>
        <begin position="1106"/>
        <end position="1109"/>
    </location>
</feature>
<feature type="strand" evidence="21">
    <location>
        <begin position="300"/>
        <end position="307"/>
    </location>
</feature>
<feature type="strand" evidence="21">
    <location>
        <begin position="313"/>
        <end position="319"/>
    </location>
</feature>
<feature type="strand" evidence="21">
    <location>
        <begin position="323"/>
        <end position="328"/>
    </location>
</feature>
<feature type="strand" evidence="21">
    <location>
        <begin position="334"/>
        <end position="345"/>
    </location>
</feature>
<feature type="strand" evidence="21">
    <location>
        <begin position="347"/>
        <end position="366"/>
    </location>
</feature>
<feature type="helix" evidence="21">
    <location>
        <begin position="376"/>
        <end position="378"/>
    </location>
</feature>
<feature type="strand" evidence="21">
    <location>
        <begin position="383"/>
        <end position="392"/>
    </location>
</feature>
<feature type="helix" evidence="21">
    <location>
        <begin position="394"/>
        <end position="396"/>
    </location>
</feature>
<feature type="strand" evidence="21">
    <location>
        <begin position="402"/>
        <end position="422"/>
    </location>
</feature>
<feature type="helix" evidence="21">
    <location>
        <begin position="425"/>
        <end position="427"/>
    </location>
</feature>
<feature type="strand" evidence="21">
    <location>
        <begin position="428"/>
        <end position="436"/>
    </location>
</feature>
<feature type="turn" evidence="21">
    <location>
        <begin position="442"/>
        <end position="446"/>
    </location>
</feature>
<feature type="helix" evidence="21">
    <location>
        <begin position="448"/>
        <end position="453"/>
    </location>
</feature>
<feature type="strand" evidence="21">
    <location>
        <begin position="456"/>
        <end position="462"/>
    </location>
</feature>
<feature type="strand" evidence="21">
    <location>
        <begin position="468"/>
        <end position="472"/>
    </location>
</feature>
<feature type="helix" evidence="21">
    <location>
        <begin position="474"/>
        <end position="476"/>
    </location>
</feature>
<feature type="strand" evidence="21">
    <location>
        <begin position="477"/>
        <end position="486"/>
    </location>
</feature>
<feature type="helix" evidence="21">
    <location>
        <begin position="487"/>
        <end position="489"/>
    </location>
</feature>
<feature type="helix" evidence="21">
    <location>
        <begin position="491"/>
        <end position="493"/>
    </location>
</feature>
<feature type="strand" evidence="21">
    <location>
        <begin position="494"/>
        <end position="499"/>
    </location>
</feature>
<feature type="strand" evidence="21">
    <location>
        <begin position="502"/>
        <end position="507"/>
    </location>
</feature>
<feature type="helix" evidence="21">
    <location>
        <begin position="508"/>
        <end position="512"/>
    </location>
</feature>
<feature type="strand" evidence="21">
    <location>
        <begin position="521"/>
        <end position="523"/>
    </location>
</feature>
<feature type="turn" evidence="21">
    <location>
        <begin position="529"/>
        <end position="532"/>
    </location>
</feature>
<feature type="strand" evidence="21">
    <location>
        <begin position="533"/>
        <end position="535"/>
    </location>
</feature>
<feature type="strand" evidence="21">
    <location>
        <begin position="545"/>
        <end position="547"/>
    </location>
</feature>
<feature type="helix" evidence="21">
    <location>
        <begin position="552"/>
        <end position="559"/>
    </location>
</feature>
<feature type="strand" evidence="21">
    <location>
        <begin position="562"/>
        <end position="565"/>
    </location>
</feature>
<feature type="strand" evidence="21">
    <location>
        <begin position="570"/>
        <end position="572"/>
    </location>
</feature>
<feature type="strand" evidence="21">
    <location>
        <begin position="575"/>
        <end position="583"/>
    </location>
</feature>
<feature type="strand" evidence="22">
    <location>
        <begin position="601"/>
        <end position="609"/>
    </location>
</feature>
<feature type="strand" evidence="22">
    <location>
        <begin position="611"/>
        <end position="613"/>
    </location>
</feature>
<feature type="strand" evidence="22">
    <location>
        <begin position="615"/>
        <end position="621"/>
    </location>
</feature>
<feature type="strand" evidence="22">
    <location>
        <begin position="627"/>
        <end position="629"/>
    </location>
</feature>
<feature type="strand" evidence="22">
    <location>
        <begin position="632"/>
        <end position="637"/>
    </location>
</feature>
<feature type="strand" evidence="22">
    <location>
        <begin position="640"/>
        <end position="649"/>
    </location>
</feature>
<feature type="strand" evidence="22">
    <location>
        <begin position="662"/>
        <end position="668"/>
    </location>
</feature>
<feature type="strand" evidence="22">
    <location>
        <begin position="671"/>
        <end position="679"/>
    </location>
</feature>
<feature type="helix" evidence="22">
    <location>
        <begin position="681"/>
        <end position="683"/>
    </location>
</feature>
<feature type="strand" evidence="22">
    <location>
        <begin position="685"/>
        <end position="691"/>
    </location>
</feature>
<feature type="helix" evidence="23">
    <location>
        <begin position="2537"/>
        <end position="2546"/>
    </location>
</feature>
<feature type="helix" evidence="23">
    <location>
        <begin position="2550"/>
        <end position="2557"/>
    </location>
</feature>
<feature type="turn" evidence="23">
    <location>
        <begin position="2558"/>
        <end position="2560"/>
    </location>
</feature>
<feature type="strand" evidence="23">
    <location>
        <begin position="2562"/>
        <end position="2565"/>
    </location>
</feature>
<feature type="helix" evidence="23">
    <location>
        <begin position="2567"/>
        <end position="2575"/>
    </location>
</feature>
<feature type="strand" evidence="23">
    <location>
        <begin position="2578"/>
        <end position="2580"/>
    </location>
</feature>
<feature type="helix" evidence="23">
    <location>
        <begin position="2587"/>
        <end position="2596"/>
    </location>
</feature>
<feature type="strand" evidence="23">
    <location>
        <begin position="2604"/>
        <end position="2609"/>
    </location>
</feature>
<feature type="turn" evidence="24">
    <location>
        <begin position="2612"/>
        <end position="2614"/>
    </location>
</feature>
<feature type="helix" evidence="23">
    <location>
        <begin position="2615"/>
        <end position="2621"/>
    </location>
</feature>
<feature type="strand" evidence="23">
    <location>
        <begin position="2626"/>
        <end position="2633"/>
    </location>
</feature>
<feature type="helix" evidence="23">
    <location>
        <begin position="2650"/>
        <end position="2652"/>
    </location>
</feature>
<feature type="strand" evidence="23">
    <location>
        <begin position="2653"/>
        <end position="2658"/>
    </location>
</feature>
<feature type="helix" evidence="23">
    <location>
        <begin position="2661"/>
        <end position="2663"/>
    </location>
</feature>
<feature type="strand" evidence="23">
    <location>
        <begin position="2670"/>
        <end position="2674"/>
    </location>
</feature>
<feature type="helix" evidence="23">
    <location>
        <begin position="2683"/>
        <end position="2701"/>
    </location>
</feature>
<feature type="strand" evidence="23">
    <location>
        <begin position="2707"/>
        <end position="2713"/>
    </location>
</feature>
<feature type="helix" evidence="23">
    <location>
        <begin position="2718"/>
        <end position="2731"/>
    </location>
</feature>
<feature type="strand" evidence="23">
    <location>
        <begin position="2734"/>
        <end position="2736"/>
    </location>
</feature>
<feature type="strand" evidence="23">
    <location>
        <begin position="2748"/>
        <end position="2751"/>
    </location>
</feature>
<feature type="helix" evidence="23">
    <location>
        <begin position="2758"/>
        <end position="2773"/>
    </location>
</feature>
<feature type="strand" evidence="23">
    <location>
        <begin position="2782"/>
        <end position="2785"/>
    </location>
</feature>
<dbReference type="EC" id="3.4.21.91"/>
<dbReference type="EC" id="3.6.1.15"/>
<dbReference type="EC" id="3.6.4.13"/>
<dbReference type="EC" id="2.1.1.56" evidence="17"/>
<dbReference type="EC" id="2.1.1.57" evidence="17"/>
<dbReference type="EC" id="2.7.7.48" evidence="12"/>
<dbReference type="EMBL" id="AY453411">
    <property type="protein sequence ID" value="AAS59402.1"/>
    <property type="molecule type" value="Genomic_RNA"/>
</dbReference>
<dbReference type="RefSeq" id="YP_164264.1">
    <property type="nucleotide sequence ID" value="NC_006551.1"/>
</dbReference>
<dbReference type="PDB" id="6A0P">
    <property type="method" value="X-ray"/>
    <property type="resolution" value="2.00 A"/>
    <property type="chains" value="A=294-699"/>
</dbReference>
<dbReference type="PDB" id="6S92">
    <property type="method" value="X-ray"/>
    <property type="resolution" value="1.93 A"/>
    <property type="chains" value="A=591-693"/>
</dbReference>
<dbReference type="PDB" id="6S93">
    <property type="method" value="X-ray"/>
    <property type="resolution" value="1.67 A"/>
    <property type="chains" value="A/B/C=591-693"/>
</dbReference>
<dbReference type="PDB" id="6S94">
    <property type="method" value="X-ray"/>
    <property type="resolution" value="1.79 A"/>
    <property type="chains" value="A/B=591-693"/>
</dbReference>
<dbReference type="PDB" id="8B51">
    <property type="method" value="X-ray"/>
    <property type="resolution" value="1.84 A"/>
    <property type="chains" value="A/B=2535-2797"/>
</dbReference>
<dbReference type="PDB" id="8B52">
    <property type="method" value="X-ray"/>
    <property type="resolution" value="2.22 A"/>
    <property type="chains" value="A/B=2533-2797"/>
</dbReference>
<dbReference type="PDBsum" id="6A0P"/>
<dbReference type="PDBsum" id="6S92"/>
<dbReference type="PDBsum" id="6S93"/>
<dbReference type="PDBsum" id="6S94"/>
<dbReference type="PDBsum" id="8B51"/>
<dbReference type="PDBsum" id="8B52"/>
<dbReference type="SMR" id="Q5WPU5"/>
<dbReference type="MEROPS" id="S07.003"/>
<dbReference type="ABCD" id="Q5WPU5">
    <property type="antibodies" value="5 sequenced antibodies"/>
</dbReference>
<dbReference type="GeneID" id="5075863"/>
<dbReference type="KEGG" id="vg:5075863"/>
<dbReference type="Proteomes" id="UP000170913">
    <property type="component" value="Genome"/>
</dbReference>
<dbReference type="GO" id="GO:0005576">
    <property type="term" value="C:extracellular region"/>
    <property type="evidence" value="ECO:0007669"/>
    <property type="project" value="UniProtKB-SubCell"/>
</dbReference>
<dbReference type="GO" id="GO:0044167">
    <property type="term" value="C:host cell endoplasmic reticulum membrane"/>
    <property type="evidence" value="ECO:0007669"/>
    <property type="project" value="UniProtKB-SubCell"/>
</dbReference>
<dbReference type="GO" id="GO:0042025">
    <property type="term" value="C:host cell nucleus"/>
    <property type="evidence" value="ECO:0007669"/>
    <property type="project" value="UniProtKB-SubCell"/>
</dbReference>
<dbReference type="GO" id="GO:0044220">
    <property type="term" value="C:host cell perinuclear region of cytoplasm"/>
    <property type="evidence" value="ECO:0007669"/>
    <property type="project" value="UniProtKB-SubCell"/>
</dbReference>
<dbReference type="GO" id="GO:0016020">
    <property type="term" value="C:membrane"/>
    <property type="evidence" value="ECO:0007669"/>
    <property type="project" value="UniProtKB-KW"/>
</dbReference>
<dbReference type="GO" id="GO:0019028">
    <property type="term" value="C:viral capsid"/>
    <property type="evidence" value="ECO:0007669"/>
    <property type="project" value="UniProtKB-KW"/>
</dbReference>
<dbReference type="GO" id="GO:0019031">
    <property type="term" value="C:viral envelope"/>
    <property type="evidence" value="ECO:0007669"/>
    <property type="project" value="UniProtKB-KW"/>
</dbReference>
<dbReference type="GO" id="GO:0055036">
    <property type="term" value="C:virion membrane"/>
    <property type="evidence" value="ECO:0007669"/>
    <property type="project" value="UniProtKB-SubCell"/>
</dbReference>
<dbReference type="GO" id="GO:0005524">
    <property type="term" value="F:ATP binding"/>
    <property type="evidence" value="ECO:0007669"/>
    <property type="project" value="UniProtKB-KW"/>
</dbReference>
<dbReference type="GO" id="GO:0016887">
    <property type="term" value="F:ATP hydrolysis activity"/>
    <property type="evidence" value="ECO:0007669"/>
    <property type="project" value="RHEA"/>
</dbReference>
<dbReference type="GO" id="GO:0003725">
    <property type="term" value="F:double-stranded RNA binding"/>
    <property type="evidence" value="ECO:0007669"/>
    <property type="project" value="InterPro"/>
</dbReference>
<dbReference type="GO" id="GO:0046872">
    <property type="term" value="F:metal ion binding"/>
    <property type="evidence" value="ECO:0007669"/>
    <property type="project" value="UniProtKB-KW"/>
</dbReference>
<dbReference type="GO" id="GO:0004483">
    <property type="term" value="F:mRNA (nucleoside-2'-O-)-methyltransferase activity"/>
    <property type="evidence" value="ECO:0007669"/>
    <property type="project" value="UniProtKB-EC"/>
</dbReference>
<dbReference type="GO" id="GO:0004482">
    <property type="term" value="F:mRNA 5'-cap (guanine-N7-)-methyltransferase activity"/>
    <property type="evidence" value="ECO:0007669"/>
    <property type="project" value="UniProtKB-EC"/>
</dbReference>
<dbReference type="GO" id="GO:0046983">
    <property type="term" value="F:protein dimerization activity"/>
    <property type="evidence" value="ECO:0007669"/>
    <property type="project" value="InterPro"/>
</dbReference>
<dbReference type="GO" id="GO:0003724">
    <property type="term" value="F:RNA helicase activity"/>
    <property type="evidence" value="ECO:0007669"/>
    <property type="project" value="UniProtKB-EC"/>
</dbReference>
<dbReference type="GO" id="GO:0003968">
    <property type="term" value="F:RNA-directed RNA polymerase activity"/>
    <property type="evidence" value="ECO:0007669"/>
    <property type="project" value="UniProtKB-KW"/>
</dbReference>
<dbReference type="GO" id="GO:0004252">
    <property type="term" value="F:serine-type endopeptidase activity"/>
    <property type="evidence" value="ECO:0007669"/>
    <property type="project" value="InterPro"/>
</dbReference>
<dbReference type="GO" id="GO:0005198">
    <property type="term" value="F:structural molecule activity"/>
    <property type="evidence" value="ECO:0007669"/>
    <property type="project" value="InterPro"/>
</dbReference>
<dbReference type="GO" id="GO:0075512">
    <property type="term" value="P:clathrin-dependent endocytosis of virus by host cell"/>
    <property type="evidence" value="ECO:0007669"/>
    <property type="project" value="UniProtKB-KW"/>
</dbReference>
<dbReference type="GO" id="GO:0039654">
    <property type="term" value="P:fusion of virus membrane with host endosome membrane"/>
    <property type="evidence" value="ECO:0007669"/>
    <property type="project" value="UniProtKB-KW"/>
</dbReference>
<dbReference type="GO" id="GO:0006508">
    <property type="term" value="P:proteolysis"/>
    <property type="evidence" value="ECO:0007669"/>
    <property type="project" value="UniProtKB-KW"/>
</dbReference>
<dbReference type="GO" id="GO:0039520">
    <property type="term" value="P:symbiont-mediated activation of host autophagy"/>
    <property type="evidence" value="ECO:0007669"/>
    <property type="project" value="UniProtKB-KW"/>
</dbReference>
<dbReference type="GO" id="GO:0039574">
    <property type="term" value="P:symbiont-mediated suppression of host JAK-STAT cascade via inhibition of host TYK2 activity"/>
    <property type="evidence" value="ECO:0007669"/>
    <property type="project" value="UniProtKB-KW"/>
</dbReference>
<dbReference type="GO" id="GO:0039563">
    <property type="term" value="P:symbiont-mediated suppression of host JAK-STAT cascade via inhibition of STAT1 activity"/>
    <property type="evidence" value="ECO:0007669"/>
    <property type="project" value="UniProtKB-KW"/>
</dbReference>
<dbReference type="GO" id="GO:0039564">
    <property type="term" value="P:symbiont-mediated suppression of host JAK-STAT cascade via inhibition of STAT2 activity"/>
    <property type="evidence" value="ECO:0007669"/>
    <property type="project" value="UniProtKB-KW"/>
</dbReference>
<dbReference type="GO" id="GO:0039502">
    <property type="term" value="P:symbiont-mediated suppression of host type I interferon-mediated signaling pathway"/>
    <property type="evidence" value="ECO:0007669"/>
    <property type="project" value="UniProtKB-KW"/>
</dbReference>
<dbReference type="GO" id="GO:0039694">
    <property type="term" value="P:viral RNA genome replication"/>
    <property type="evidence" value="ECO:0007669"/>
    <property type="project" value="InterPro"/>
</dbReference>
<dbReference type="GO" id="GO:0019062">
    <property type="term" value="P:virion attachment to host cell"/>
    <property type="evidence" value="ECO:0007669"/>
    <property type="project" value="UniProtKB-KW"/>
</dbReference>
<dbReference type="CDD" id="cd20761">
    <property type="entry name" value="capping_2-OMTase_Flaviviridae"/>
    <property type="match status" value="1"/>
</dbReference>
<dbReference type="CDD" id="cd17931">
    <property type="entry name" value="DEXHc_viral_Ns3"/>
    <property type="match status" value="1"/>
</dbReference>
<dbReference type="CDD" id="cd12149">
    <property type="entry name" value="Flavi_E_C"/>
    <property type="match status" value="1"/>
</dbReference>
<dbReference type="CDD" id="cd23204">
    <property type="entry name" value="Flavivirus_RdRp"/>
    <property type="match status" value="1"/>
</dbReference>
<dbReference type="CDD" id="cd18806">
    <property type="entry name" value="SF2_C_viral"/>
    <property type="match status" value="1"/>
</dbReference>
<dbReference type="FunFam" id="1.20.1280.260:FF:000001">
    <property type="entry name" value="Envelope glycoprotein"/>
    <property type="match status" value="1"/>
</dbReference>
<dbReference type="FunFam" id="2.60.40.350:FF:000001">
    <property type="entry name" value="Envelope glycoprotein"/>
    <property type="match status" value="1"/>
</dbReference>
<dbReference type="FunFam" id="1.10.260.90:FF:000001">
    <property type="entry name" value="Genome polyprotein"/>
    <property type="match status" value="1"/>
</dbReference>
<dbReference type="FunFam" id="2.60.260.50:FF:000001">
    <property type="entry name" value="Genome polyprotein"/>
    <property type="match status" value="1"/>
</dbReference>
<dbReference type="FunFam" id="3.30.70.2840:FF:000001">
    <property type="entry name" value="Genome polyprotein"/>
    <property type="match status" value="1"/>
</dbReference>
<dbReference type="FunFam" id="3.30.70.2840:FF:000002">
    <property type="entry name" value="Genome polyprotein"/>
    <property type="match status" value="1"/>
</dbReference>
<dbReference type="FunFam" id="3.40.50.150:FF:000105">
    <property type="entry name" value="Genome polyprotein"/>
    <property type="match status" value="1"/>
</dbReference>
<dbReference type="FunFam" id="3.40.50.300:FF:000763">
    <property type="entry name" value="Genome polyprotein"/>
    <property type="match status" value="1"/>
</dbReference>
<dbReference type="Gene3D" id="1.10.10.930">
    <property type="match status" value="1"/>
</dbReference>
<dbReference type="Gene3D" id="1.10.260.90">
    <property type="match status" value="1"/>
</dbReference>
<dbReference type="Gene3D" id="1.20.1280.260">
    <property type="match status" value="1"/>
</dbReference>
<dbReference type="Gene3D" id="2.40.10.120">
    <property type="match status" value="2"/>
</dbReference>
<dbReference type="Gene3D" id="2.60.40.350">
    <property type="match status" value="1"/>
</dbReference>
<dbReference type="Gene3D" id="1.10.8.970">
    <property type="entry name" value="Flavivirus envelope glycoprotein M-like"/>
    <property type="match status" value="1"/>
</dbReference>
<dbReference type="Gene3D" id="2.60.260.50">
    <property type="entry name" value="Flavivirus polyprotein propeptide domain"/>
    <property type="match status" value="1"/>
</dbReference>
<dbReference type="Gene3D" id="3.30.70.2840">
    <property type="entry name" value="Flavivirus RNA-directed RNA polymerase, thumb domain"/>
    <property type="match status" value="3"/>
</dbReference>
<dbReference type="Gene3D" id="3.40.50.300">
    <property type="entry name" value="P-loop containing nucleotide triphosphate hydrolases"/>
    <property type="match status" value="2"/>
</dbReference>
<dbReference type="Gene3D" id="2.60.98.10">
    <property type="entry name" value="Tick-borne Encephalitis virus Glycoprotein, domain 1"/>
    <property type="match status" value="1"/>
</dbReference>
<dbReference type="Gene3D" id="3.40.50.150">
    <property type="entry name" value="Vaccinia Virus protein VP39"/>
    <property type="match status" value="1"/>
</dbReference>
<dbReference type="Gene3D" id="3.30.67.10">
    <property type="entry name" value="Viral Envelope Glycoprotein, domain 2"/>
    <property type="match status" value="1"/>
</dbReference>
<dbReference type="Gene3D" id="3.30.387.10">
    <property type="entry name" value="Viral Envelope Glycoprotein, domain 3"/>
    <property type="match status" value="1"/>
</dbReference>
<dbReference type="InterPro" id="IPR043502">
    <property type="entry name" value="DNA/RNA_pol_sf"/>
</dbReference>
<dbReference type="InterPro" id="IPR000069">
    <property type="entry name" value="Env_glycoprot_M_flavivir"/>
</dbReference>
<dbReference type="InterPro" id="IPR038302">
    <property type="entry name" value="Env_glycoprot_M_sf_flavivir"/>
</dbReference>
<dbReference type="InterPro" id="IPR013755">
    <property type="entry name" value="Flav_gly_cen_dom_subdom1"/>
</dbReference>
<dbReference type="InterPro" id="IPR001122">
    <property type="entry name" value="Flavi_capsidC"/>
</dbReference>
<dbReference type="InterPro" id="IPR037172">
    <property type="entry name" value="Flavi_capsidC_sf"/>
</dbReference>
<dbReference type="InterPro" id="IPR011492">
    <property type="entry name" value="Flavi_DEAD"/>
</dbReference>
<dbReference type="InterPro" id="IPR027287">
    <property type="entry name" value="Flavi_E_Ig-like"/>
</dbReference>
<dbReference type="InterPro" id="IPR026470">
    <property type="entry name" value="Flavi_E_Stem/Anchor_dom"/>
</dbReference>
<dbReference type="InterPro" id="IPR038345">
    <property type="entry name" value="Flavi_E_Stem/Anchor_dom_sf"/>
</dbReference>
<dbReference type="InterPro" id="IPR011998">
    <property type="entry name" value="Flavi_Glycoprot_E_cen/dimer"/>
</dbReference>
<dbReference type="InterPro" id="IPR001157">
    <property type="entry name" value="Flavi_NS1"/>
</dbReference>
<dbReference type="InterPro" id="IPR000752">
    <property type="entry name" value="Flavi_NS2A"/>
</dbReference>
<dbReference type="InterPro" id="IPR000487">
    <property type="entry name" value="Flavi_NS2B"/>
</dbReference>
<dbReference type="InterPro" id="IPR001850">
    <property type="entry name" value="Flavi_NS3_S7"/>
</dbReference>
<dbReference type="InterPro" id="IPR000404">
    <property type="entry name" value="Flavi_NS4A"/>
</dbReference>
<dbReference type="InterPro" id="IPR001528">
    <property type="entry name" value="Flavi_NS4B"/>
</dbReference>
<dbReference type="InterPro" id="IPR046811">
    <property type="entry name" value="Flavi_NS5_thumb"/>
</dbReference>
<dbReference type="InterPro" id="IPR002535">
    <property type="entry name" value="Flavi_propep"/>
</dbReference>
<dbReference type="InterPro" id="IPR038688">
    <property type="entry name" value="Flavi_propep_sf"/>
</dbReference>
<dbReference type="InterPro" id="IPR047530">
    <property type="entry name" value="Flavi_RdRp"/>
</dbReference>
<dbReference type="InterPro" id="IPR000208">
    <property type="entry name" value="Flavi_RdRp_fingers/palm"/>
</dbReference>
<dbReference type="InterPro" id="IPR000336">
    <property type="entry name" value="Flavivir/Alphavir_Ig-like_sf"/>
</dbReference>
<dbReference type="InterPro" id="IPR014412">
    <property type="entry name" value="Gen_Poly_FLV"/>
</dbReference>
<dbReference type="InterPro" id="IPR036253">
    <property type="entry name" value="Glycoprot_cen/dimer_sf"/>
</dbReference>
<dbReference type="InterPro" id="IPR038055">
    <property type="entry name" value="Glycoprot_E_dimer_dom"/>
</dbReference>
<dbReference type="InterPro" id="IPR013756">
    <property type="entry name" value="GlyE_cen_dom_subdom2"/>
</dbReference>
<dbReference type="InterPro" id="IPR014001">
    <property type="entry name" value="Helicase_ATP-bd"/>
</dbReference>
<dbReference type="InterPro" id="IPR001650">
    <property type="entry name" value="Helicase_C-like"/>
</dbReference>
<dbReference type="InterPro" id="IPR014756">
    <property type="entry name" value="Ig_E-set"/>
</dbReference>
<dbReference type="InterPro" id="IPR026490">
    <property type="entry name" value="mRNA_cap_0/1_MeTrfase"/>
</dbReference>
<dbReference type="InterPro" id="IPR049486">
    <property type="entry name" value="NS3-hel_C_flaviviridae"/>
</dbReference>
<dbReference type="InterPro" id="IPR027417">
    <property type="entry name" value="P-loop_NTPase"/>
</dbReference>
<dbReference type="InterPro" id="IPR009003">
    <property type="entry name" value="Peptidase_S1_PA"/>
</dbReference>
<dbReference type="InterPro" id="IPR007094">
    <property type="entry name" value="RNA-dir_pol_PSvirus"/>
</dbReference>
<dbReference type="InterPro" id="IPR002877">
    <property type="entry name" value="RNA_MeTrfase_FtsJ_dom"/>
</dbReference>
<dbReference type="InterPro" id="IPR029063">
    <property type="entry name" value="SAM-dependent_MTases_sf"/>
</dbReference>
<dbReference type="NCBIfam" id="TIGR04240">
    <property type="entry name" value="flavi_E_stem"/>
    <property type="match status" value="1"/>
</dbReference>
<dbReference type="Pfam" id="PF20907">
    <property type="entry name" value="Flav_NS3-hel_C"/>
    <property type="match status" value="1"/>
</dbReference>
<dbReference type="Pfam" id="PF01003">
    <property type="entry name" value="Flavi_capsid"/>
    <property type="match status" value="1"/>
</dbReference>
<dbReference type="Pfam" id="PF07652">
    <property type="entry name" value="Flavi_DEAD"/>
    <property type="match status" value="1"/>
</dbReference>
<dbReference type="Pfam" id="PF21659">
    <property type="entry name" value="Flavi_E_stem"/>
    <property type="match status" value="1"/>
</dbReference>
<dbReference type="Pfam" id="PF02832">
    <property type="entry name" value="Flavi_glycop_C"/>
    <property type="match status" value="1"/>
</dbReference>
<dbReference type="Pfam" id="PF00869">
    <property type="entry name" value="Flavi_glycoprot"/>
    <property type="match status" value="1"/>
</dbReference>
<dbReference type="Pfam" id="PF01004">
    <property type="entry name" value="Flavi_M"/>
    <property type="match status" value="1"/>
</dbReference>
<dbReference type="Pfam" id="PF00948">
    <property type="entry name" value="Flavi_NS1"/>
    <property type="match status" value="1"/>
</dbReference>
<dbReference type="Pfam" id="PF01005">
    <property type="entry name" value="Flavi_NS2A"/>
    <property type="match status" value="1"/>
</dbReference>
<dbReference type="Pfam" id="PF01002">
    <property type="entry name" value="Flavi_NS2B"/>
    <property type="match status" value="1"/>
</dbReference>
<dbReference type="Pfam" id="PF01350">
    <property type="entry name" value="Flavi_NS4A"/>
    <property type="match status" value="1"/>
</dbReference>
<dbReference type="Pfam" id="PF01349">
    <property type="entry name" value="Flavi_NS4B"/>
    <property type="match status" value="1"/>
</dbReference>
<dbReference type="Pfam" id="PF00972">
    <property type="entry name" value="Flavi_NS5"/>
    <property type="match status" value="1"/>
</dbReference>
<dbReference type="Pfam" id="PF20483">
    <property type="entry name" value="Flavi_NS5_thumb"/>
    <property type="match status" value="1"/>
</dbReference>
<dbReference type="Pfam" id="PF01570">
    <property type="entry name" value="Flavi_propep"/>
    <property type="match status" value="1"/>
</dbReference>
<dbReference type="Pfam" id="PF01728">
    <property type="entry name" value="FtsJ"/>
    <property type="match status" value="1"/>
</dbReference>
<dbReference type="Pfam" id="PF00949">
    <property type="entry name" value="Peptidase_S7"/>
    <property type="match status" value="1"/>
</dbReference>
<dbReference type="PIRSF" id="PIRSF003817">
    <property type="entry name" value="Gen_Poly_FLV"/>
    <property type="match status" value="1"/>
</dbReference>
<dbReference type="SMART" id="SM00487">
    <property type="entry name" value="DEXDc"/>
    <property type="match status" value="1"/>
</dbReference>
<dbReference type="SMART" id="SM00490">
    <property type="entry name" value="HELICc"/>
    <property type="match status" value="1"/>
</dbReference>
<dbReference type="SUPFAM" id="SSF56672">
    <property type="entry name" value="DNA/RNA polymerases"/>
    <property type="match status" value="1"/>
</dbReference>
<dbReference type="SUPFAM" id="SSF81296">
    <property type="entry name" value="E set domains"/>
    <property type="match status" value="1"/>
</dbReference>
<dbReference type="SUPFAM" id="SSF101257">
    <property type="entry name" value="Flavivirus capsid protein C"/>
    <property type="match status" value="1"/>
</dbReference>
<dbReference type="SUPFAM" id="SSF52540">
    <property type="entry name" value="P-loop containing nucleoside triphosphate hydrolases"/>
    <property type="match status" value="2"/>
</dbReference>
<dbReference type="SUPFAM" id="SSF53335">
    <property type="entry name" value="S-adenosyl-L-methionine-dependent methyltransferases"/>
    <property type="match status" value="1"/>
</dbReference>
<dbReference type="SUPFAM" id="SSF50494">
    <property type="entry name" value="Trypsin-like serine proteases"/>
    <property type="match status" value="1"/>
</dbReference>
<dbReference type="SUPFAM" id="SSF56983">
    <property type="entry name" value="Viral glycoprotein, central and dimerisation domains"/>
    <property type="match status" value="1"/>
</dbReference>
<dbReference type="PROSITE" id="PS51527">
    <property type="entry name" value="FLAVIVIRUS_NS2B"/>
    <property type="match status" value="1"/>
</dbReference>
<dbReference type="PROSITE" id="PS51528">
    <property type="entry name" value="FLAVIVIRUS_NS3PRO"/>
    <property type="match status" value="1"/>
</dbReference>
<dbReference type="PROSITE" id="PS51192">
    <property type="entry name" value="HELICASE_ATP_BIND_1"/>
    <property type="match status" value="1"/>
</dbReference>
<dbReference type="PROSITE" id="PS51194">
    <property type="entry name" value="HELICASE_CTER"/>
    <property type="match status" value="1"/>
</dbReference>
<dbReference type="PROSITE" id="PS50507">
    <property type="entry name" value="RDRP_SSRNA_POS"/>
    <property type="match status" value="1"/>
</dbReference>
<dbReference type="PROSITE" id="PS51591">
    <property type="entry name" value="RNA_CAP01_NS5_MT"/>
    <property type="match status" value="1"/>
</dbReference>
<organism>
    <name type="scientific">Usutu virus</name>
    <name type="common">USUV</name>
    <dbReference type="NCBI Taxonomy" id="64286"/>
    <lineage>
        <taxon>Viruses</taxon>
        <taxon>Riboviria</taxon>
        <taxon>Orthornavirae</taxon>
        <taxon>Kitrinoviricota</taxon>
        <taxon>Flasuviricetes</taxon>
        <taxon>Amarillovirales</taxon>
        <taxon>Flaviviridae</taxon>
        <taxon>Orthoflavivirus</taxon>
        <taxon>Orthoflavivirus usutuense</taxon>
    </lineage>
</organism>
<name>POLG_USUV</name>
<organismHost>
    <name type="scientific">Aedes albopictus</name>
    <name type="common">Asian tiger mosquito</name>
    <name type="synonym">Stegomyia albopicta</name>
    <dbReference type="NCBI Taxonomy" id="7160"/>
</organismHost>
<organismHost>
    <name type="scientific">Anopheles maculipennis</name>
    <dbReference type="NCBI Taxonomy" id="41429"/>
</organismHost>
<organismHost>
    <name type="scientific">Coquillettidia aurites</name>
    <dbReference type="NCBI Taxonomy" id="653291"/>
</organismHost>
<organismHost>
    <name type="scientific">Culex neavei</name>
    <dbReference type="NCBI Taxonomy" id="864528"/>
</organismHost>
<organismHost>
    <name type="scientific">Culex perexiguus</name>
    <dbReference type="NCBI Taxonomy" id="943103"/>
</organismHost>
<organismHost>
    <name type="scientific">Culex pipiens</name>
    <name type="common">House mosquito</name>
    <dbReference type="NCBI Taxonomy" id="7175"/>
</organismHost>
<organismHost>
    <name type="scientific">Homo sapiens</name>
    <name type="common">Human</name>
    <dbReference type="NCBI Taxonomy" id="9606"/>
</organismHost>
<organismHost>
    <name type="scientific">Mansonia africana</name>
    <dbReference type="NCBI Taxonomy" id="667564"/>
</organismHost>
<organismHost>
    <name type="scientific">Ochlerotatus caspius</name>
    <dbReference type="NCBI Taxonomy" id="120870"/>
</organismHost>
<organismHost>
    <name type="scientific">Turdus merula</name>
    <name type="common">Common blackbird</name>
    <dbReference type="NCBI Taxonomy" id="9187"/>
</organismHost>
<keyword id="KW-0002">3D-structure</keyword>
<keyword id="KW-0007">Acetylation</keyword>
<keyword id="KW-1072">Activation of host autophagy by virus</keyword>
<keyword id="KW-0067">ATP-binding</keyword>
<keyword id="KW-0167">Capsid protein</keyword>
<keyword id="KW-1165">Clathrin-mediated endocytosis of virus by host</keyword>
<keyword id="KW-0165">Cleavage on pair of basic residues</keyword>
<keyword id="KW-1015">Disulfide bond</keyword>
<keyword id="KW-1170">Fusion of virus membrane with host endosomal membrane</keyword>
<keyword id="KW-1168">Fusion of virus membrane with host membrane</keyword>
<keyword id="KW-0325">Glycoprotein</keyword>
<keyword id="KW-0347">Helicase</keyword>
<keyword id="KW-1035">Host cytoplasm</keyword>
<keyword id="KW-1038">Host endoplasmic reticulum</keyword>
<keyword id="KW-1043">Host membrane</keyword>
<keyword id="KW-1048">Host nucleus</keyword>
<keyword id="KW-0945">Host-virus interaction</keyword>
<keyword id="KW-0378">Hydrolase</keyword>
<keyword id="KW-1090">Inhibition of host innate immune response by virus</keyword>
<keyword id="KW-1114">Inhibition of host interferon signaling pathway by virus</keyword>
<keyword id="KW-1105">Inhibition of host STAT1 by virus</keyword>
<keyword id="KW-1106">Inhibition of host STAT2 by virus</keyword>
<keyword id="KW-1112">Inhibition of host TYK2 by virus</keyword>
<keyword id="KW-0922">Interferon antiviral system evasion</keyword>
<keyword id="KW-0472">Membrane</keyword>
<keyword id="KW-0479">Metal-binding</keyword>
<keyword id="KW-0489">Methyltransferase</keyword>
<keyword id="KW-0506">mRNA capping</keyword>
<keyword id="KW-0507">mRNA processing</keyword>
<keyword id="KW-0547">Nucleotide-binding</keyword>
<keyword id="KW-0548">Nucleotidyltransferase</keyword>
<keyword id="KW-0597">Phosphoprotein</keyword>
<keyword id="KW-0645">Protease</keyword>
<keyword id="KW-0694">RNA-binding</keyword>
<keyword id="KW-0696">RNA-directed RNA polymerase</keyword>
<keyword id="KW-0949">S-adenosyl-L-methionine</keyword>
<keyword id="KW-0964">Secreted</keyword>
<keyword id="KW-0720">Serine protease</keyword>
<keyword id="KW-0941">Suppressor of RNA silencing</keyword>
<keyword id="KW-0804">Transcription</keyword>
<keyword id="KW-0805">Transcription regulation</keyword>
<keyword id="KW-0808">Transferase</keyword>
<keyword id="KW-0812">Transmembrane</keyword>
<keyword id="KW-1133">Transmembrane helix</keyword>
<keyword id="KW-1161">Viral attachment to host cell</keyword>
<keyword id="KW-0261">Viral envelope protein</keyword>
<keyword id="KW-0899">Viral immunoevasion</keyword>
<keyword id="KW-1162">Viral penetration into host cytoplasm</keyword>
<keyword id="KW-0693">Viral RNA replication</keyword>
<keyword id="KW-0946">Virion</keyword>
<keyword id="KW-1164">Virus endocytosis by host</keyword>
<keyword id="KW-1160">Virus entry into host cell</keyword>
<keyword id="KW-0862">Zinc</keyword>
<evidence type="ECO:0000250" key="1">
    <source>
        <dbReference type="UniProtKB" id="P03314"/>
    </source>
</evidence>
<evidence type="ECO:0000250" key="2">
    <source>
        <dbReference type="UniProtKB" id="P06935"/>
    </source>
</evidence>
<evidence type="ECO:0000250" key="3">
    <source>
        <dbReference type="UniProtKB" id="P14335"/>
    </source>
</evidence>
<evidence type="ECO:0000250" key="4">
    <source>
        <dbReference type="UniProtKB" id="P14336"/>
    </source>
</evidence>
<evidence type="ECO:0000250" key="5">
    <source>
        <dbReference type="UniProtKB" id="P14340"/>
    </source>
</evidence>
<evidence type="ECO:0000250" key="6">
    <source>
        <dbReference type="UniProtKB" id="P17763"/>
    </source>
</evidence>
<evidence type="ECO:0000250" key="7">
    <source>
        <dbReference type="UniProtKB" id="P29990"/>
    </source>
</evidence>
<evidence type="ECO:0000250" key="8">
    <source>
        <dbReference type="UniProtKB" id="Q32ZE1"/>
    </source>
</evidence>
<evidence type="ECO:0000250" key="9">
    <source>
        <dbReference type="UniProtKB" id="Q6YMS4"/>
    </source>
</evidence>
<evidence type="ECO:0000250" key="10">
    <source>
        <dbReference type="UniProtKB" id="Q9Q6P4"/>
    </source>
</evidence>
<evidence type="ECO:0000255" key="11"/>
<evidence type="ECO:0000255" key="12">
    <source>
        <dbReference type="PROSITE-ProRule" id="PRU00539"/>
    </source>
</evidence>
<evidence type="ECO:0000255" key="13">
    <source>
        <dbReference type="PROSITE-ProRule" id="PRU00541"/>
    </source>
</evidence>
<evidence type="ECO:0000255" key="14">
    <source>
        <dbReference type="PROSITE-ProRule" id="PRU00542"/>
    </source>
</evidence>
<evidence type="ECO:0000255" key="15">
    <source>
        <dbReference type="PROSITE-ProRule" id="PRU00859"/>
    </source>
</evidence>
<evidence type="ECO:0000255" key="16">
    <source>
        <dbReference type="PROSITE-ProRule" id="PRU00860"/>
    </source>
</evidence>
<evidence type="ECO:0000255" key="17">
    <source>
        <dbReference type="PROSITE-ProRule" id="PRU00924"/>
    </source>
</evidence>
<evidence type="ECO:0000256" key="18">
    <source>
        <dbReference type="SAM" id="MobiDB-lite"/>
    </source>
</evidence>
<evidence type="ECO:0000305" key="19"/>
<evidence type="ECO:0000312" key="20">
    <source>
        <dbReference type="EMBL" id="AAS59402.1"/>
    </source>
</evidence>
<evidence type="ECO:0007829" key="21">
    <source>
        <dbReference type="PDB" id="6A0P"/>
    </source>
</evidence>
<evidence type="ECO:0007829" key="22">
    <source>
        <dbReference type="PDB" id="6S93"/>
    </source>
</evidence>
<evidence type="ECO:0007829" key="23">
    <source>
        <dbReference type="PDB" id="8B51"/>
    </source>
</evidence>
<evidence type="ECO:0007829" key="24">
    <source>
        <dbReference type="PDB" id="8B52"/>
    </source>
</evidence>
<proteinExistence type="evidence at protein level"/>
<accession>Q5WPU5</accession>
<comment type="function">
    <molecule>Capsid protein C</molecule>
    <text evidence="6">Plays a role in virus budding by binding to the cell membrane and gathering the viral RNA into a nucleocapsid that forms the core of a mature virus particle. During virus entry, may induce genome penetration into the host cytoplasm after hemifusion induced by the surface proteins. Can migrate to the cell nucleus where it modulates host functions. Overcomes the anti-viral effects of host EXOC1 by sequestering and degrading the latter through the proteasome degradation pathway.</text>
</comment>
<comment type="function">
    <molecule>Capsid protein C</molecule>
    <text evidence="1">Inhibits RNA silencing by interfering with host Dicer.</text>
</comment>
<comment type="function">
    <molecule>Peptide pr</molecule>
    <text evidence="6">Prevents premature fusion activity of envelope proteins in trans-Golgi by binding to envelope protein E at pH6.0. After virion release in extracellular space, gets dissociated from E dimers.</text>
</comment>
<comment type="function">
    <molecule>Protein prM</molecule>
    <text evidence="6">Acts as a chaperone for envelope protein E during intracellular virion assembly by masking and inactivating envelope protein E fusion peptide. prM is the only viral peptide matured by host furin in the trans-Golgi network probably to avoid catastrophic activation of the viral fusion activity in acidic Golgi compartment prior to virion release. prM-E cleavage is inefficient, and many virions are only partially matured. These uncleaved prM would play a role in immune evasion.</text>
</comment>
<comment type="function">
    <molecule>Small envelope protein M</molecule>
    <text evidence="6">May play a role in virus budding. Exerts cytotoxic effects by activating a mitochondrial apoptotic pathway through M ectodomain. May display a viroporin activity.</text>
</comment>
<comment type="function">
    <molecule>Envelope protein E</molecule>
    <text evidence="6">Binds to host cell surface receptor and mediates fusion between viral and cellular membranes. Envelope protein is synthesized in the endoplasmic reticulum in the form of heterodimer with protein prM. They play a role in virion budding in the ER, and the newly formed immature particle is covered with 60 spikes composed of heterodimer between precursor prM and envelope protein E. The virion is transported to the Golgi apparatus where the low pH causes dissociation of PrM-E heterodimers and formation of E homodimers. prM-E cleavage is inefficient, and many virions are only partially matured. These uncleaved prM would play a role in immune evasion.</text>
</comment>
<comment type="function">
    <molecule>Non-structural protein 1</molecule>
    <text evidence="10">Involved in immune evasion, pathogenesis and viral replication. Once cleaved off the polyprotein, is targeted to three destinations: the viral replication cycle, the plasma membrane and the extracellular compartment. Essential for viral replication. Required for formation of the replication complex and recruitment of other non-structural proteins to the ER-derived membrane structures. Excreted as a hexameric lipoparticle that plays a role against host immune response. Antagonizing the complement function. Binds to the host macrophages and dendritic cells. Inhibits signal transduction originating from Toll-like receptor 3 (TLR3).</text>
</comment>
<comment type="function">
    <molecule>Non-structural protein 2A</molecule>
    <text evidence="3">Component of the viral RNA replication complex that functions in virion assembly and antagonizes the host alpha/beta interferon antiviral response.</text>
</comment>
<comment type="function">
    <molecule>Serine protease subunit NS2B</molecule>
    <text evidence="6 15">Required cofactor for the serine protease function of NS3. May have membrane-destabilizing activity and form viroporins (By similarity).</text>
</comment>
<comment type="function">
    <molecule>Serine protease NS3</molecule>
    <text evidence="16">Displays three enzymatic activities: serine protease, NTPase and RNA helicase. NS3 serine protease, in association with NS2B, performs its autocleavage and cleaves the polyprotein at dibasic sites in the cytoplasm: C-prM, NS2A-NS2B, NS2B-NS3, NS3-NS4A, NS4A-2K and NS4B-NS5. NS3 RNA helicase binds RNA and unwinds dsRNA in the 3' to 5' direction.</text>
</comment>
<comment type="function">
    <molecule>Non-structural protein 4A</molecule>
    <text evidence="10">Regulates the ATPase activity of the NS3 helicase activity. NS4A allows NS3 helicase to conserve energy during unwinding.</text>
</comment>
<comment type="function">
    <molecule>Peptide 2k</molecule>
    <text evidence="6">Functions as a signal peptide for NS4B and is required for the interferon antagonism activity of the latter.</text>
</comment>
<comment type="function">
    <molecule>Non-structural protein 4B</molecule>
    <text evidence="10">Induces the formation of ER-derived membrane vesicles where the viral replication takes place. Inhibits interferon (IFN)-induced host STAT1 phosphorylation and nuclear translocation, thereby preventing the establishment of cellular antiviral state by blocking the IFN-alpha/beta pathway. Inhibits STAT2 translocation in the nucleus after IFN-alpha treatment.</text>
</comment>
<comment type="function">
    <molecule>RNA-directed RNA polymerase NS5</molecule>
    <text evidence="10">Replicates the viral (+) and (-) RNA genome, and performs the capping of genomes in the cytoplasm. NS5 methylates viral RNA cap at guanine N-7 and ribose 2'-O positions. Besides its role in RNA genome replication, also prevents the establishment of cellular antiviral state by blocking the interferon-alpha/beta (IFN-alpha/beta) signaling pathway. Inhibits host TYK2 and STAT2 phosphorylation, thereby preventing activation of JAK-STAT signaling pathway.</text>
</comment>
<comment type="catalytic activity">
    <reaction>
        <text>Selective hydrolysis of -Xaa-Xaa-|-Yaa- bonds in which each of the Xaa can be either Arg or Lys and Yaa can be either Ser or Ala.</text>
        <dbReference type="EC" id="3.4.21.91"/>
    </reaction>
</comment>
<comment type="catalytic activity">
    <reaction evidence="12">
        <text>RNA(n) + a ribonucleoside 5'-triphosphate = RNA(n+1) + diphosphate</text>
        <dbReference type="Rhea" id="RHEA:21248"/>
        <dbReference type="Rhea" id="RHEA-COMP:14527"/>
        <dbReference type="Rhea" id="RHEA-COMP:17342"/>
        <dbReference type="ChEBI" id="CHEBI:33019"/>
        <dbReference type="ChEBI" id="CHEBI:61557"/>
        <dbReference type="ChEBI" id="CHEBI:140395"/>
        <dbReference type="EC" id="2.7.7.48"/>
    </reaction>
</comment>
<comment type="catalytic activity">
    <reaction>
        <text>a ribonucleoside 5'-triphosphate + H2O = a ribonucleoside 5'-diphosphate + phosphate + H(+)</text>
        <dbReference type="Rhea" id="RHEA:23680"/>
        <dbReference type="ChEBI" id="CHEBI:15377"/>
        <dbReference type="ChEBI" id="CHEBI:15378"/>
        <dbReference type="ChEBI" id="CHEBI:43474"/>
        <dbReference type="ChEBI" id="CHEBI:57930"/>
        <dbReference type="ChEBI" id="CHEBI:61557"/>
        <dbReference type="EC" id="3.6.1.15"/>
    </reaction>
</comment>
<comment type="catalytic activity">
    <reaction evidence="10">
        <text>ATP + H2O = ADP + phosphate + H(+)</text>
        <dbReference type="Rhea" id="RHEA:13065"/>
        <dbReference type="ChEBI" id="CHEBI:15377"/>
        <dbReference type="ChEBI" id="CHEBI:15378"/>
        <dbReference type="ChEBI" id="CHEBI:30616"/>
        <dbReference type="ChEBI" id="CHEBI:43474"/>
        <dbReference type="ChEBI" id="CHEBI:456216"/>
        <dbReference type="EC" id="3.6.4.13"/>
    </reaction>
</comment>
<comment type="catalytic activity">
    <reaction evidence="17">
        <text>a 5'-end (5'-triphosphoguanosine)-ribonucleoside in mRNA + S-adenosyl-L-methionine = a 5'-end (N(7)-methyl 5'-triphosphoguanosine)-ribonucleoside in mRNA + S-adenosyl-L-homocysteine</text>
        <dbReference type="Rhea" id="RHEA:67008"/>
        <dbReference type="Rhea" id="RHEA-COMP:17166"/>
        <dbReference type="Rhea" id="RHEA-COMP:17167"/>
        <dbReference type="ChEBI" id="CHEBI:57856"/>
        <dbReference type="ChEBI" id="CHEBI:59789"/>
        <dbReference type="ChEBI" id="CHEBI:156461"/>
        <dbReference type="ChEBI" id="CHEBI:167617"/>
        <dbReference type="EC" id="2.1.1.56"/>
    </reaction>
</comment>
<comment type="catalytic activity">
    <reaction evidence="17">
        <text>a 5'-end (N(7)-methyl 5'-triphosphoguanosine)-ribonucleoside in mRNA + S-adenosyl-L-methionine = a 5'-end (N(7)-methyl 5'-triphosphoguanosine)-(2'-O-methyl-ribonucleoside) in mRNA + S-adenosyl-L-homocysteine + H(+)</text>
        <dbReference type="Rhea" id="RHEA:67020"/>
        <dbReference type="Rhea" id="RHEA-COMP:17167"/>
        <dbReference type="Rhea" id="RHEA-COMP:17168"/>
        <dbReference type="ChEBI" id="CHEBI:15378"/>
        <dbReference type="ChEBI" id="CHEBI:57856"/>
        <dbReference type="ChEBI" id="CHEBI:59789"/>
        <dbReference type="ChEBI" id="CHEBI:156461"/>
        <dbReference type="ChEBI" id="CHEBI:167609"/>
        <dbReference type="EC" id="2.1.1.57"/>
    </reaction>
</comment>
<comment type="subunit">
    <molecule>Capsid protein C</molecule>
    <text evidence="6">Homodimer (By similarity). Interacts (via N-terminus) with host EXOC1 (via C-terminus); this interaction results in EXOC1 degradation through the proteasome degradation pathway (By similarity).</text>
</comment>
<comment type="subunit">
    <molecule>Protein prM</molecule>
    <text evidence="6">Forms heterodimers with envelope protein E in the endoplasmic reticulum and Golgi.</text>
</comment>
<comment type="subunit">
    <molecule>Envelope protein E</molecule>
    <text evidence="6">Homodimer; in the endoplasmic reticulum and Golgi (By similarity). Interacts with protein prM (By similarity). Interacts with non-structural protein 1 (By similarity).</text>
</comment>
<comment type="subunit">
    <molecule>Non-structural protein 1</molecule>
    <text evidence="10">Homodimer; Homohexamer when secreted (By similarity). Interacts with envelope protein E (By similarity). NS1 interacts with NS4B (By similarity). Interacts with host complement protein CFH; this interaction leads to the degradation of C3 (By similarity).</text>
</comment>
<comment type="subunit">
    <molecule>Non-structural protein 2A</molecule>
    <text evidence="1">Interacts (via N-terminus) with serine protease NS3.</text>
</comment>
<comment type="subunit">
    <molecule>Serine protease subunit NS2B</molecule>
    <text evidence="6">Forms a heterodimer with serine protease NS3 (By similarity). May form homooligomers (By similarity).</text>
</comment>
<comment type="subunit">
    <molecule>Serine protease NS3</molecule>
    <text evidence="6">Forms a heterodimer with NS2B (By similarity). Interacts with non-structural protein 2A (via N-terminus) (By similarity). Interacts with NS4B (By similarity). Interacts with unphosphorylated RNA-directed RNA polymerase NS5; this interaction stimulates RNA-directed RNA polymerase NS5 guanylyltransferase activity (By similarity).</text>
</comment>
<comment type="subunit">
    <molecule>Non-structural protein 4B</molecule>
    <text evidence="6">Interacts with serine protease NS3 (By similarity).</text>
</comment>
<comment type="subunit">
    <molecule>RNA-directed RNA polymerase NS5</molecule>
    <text evidence="6">Homodimer. Interacts with host STAT2; this interaction inhibits the phosphorylation of the latter, and, when all viral proteins are present (polyprotein), targets STAT2 for degradation. Interacts with serine protease NS3.</text>
</comment>
<comment type="subcellular location">
    <molecule>Capsid protein C</molecule>
    <subcellularLocation>
        <location evidence="6">Virion</location>
    </subcellularLocation>
    <subcellularLocation>
        <location evidence="6">Host nucleus</location>
    </subcellularLocation>
    <subcellularLocation>
        <location evidence="2">Host cytoplasm</location>
    </subcellularLocation>
    <subcellularLocation>
        <location evidence="2">Host cytoplasm</location>
        <location evidence="2">Host perinuclear region</location>
    </subcellularLocation>
</comment>
<comment type="subcellular location">
    <molecule>Peptide pr</molecule>
    <subcellularLocation>
        <location evidence="6">Secreted</location>
    </subcellularLocation>
</comment>
<comment type="subcellular location">
    <molecule>Small envelope protein M</molecule>
    <subcellularLocation>
        <location evidence="1">Virion membrane</location>
        <topology evidence="1">Multi-pass membrane protein</topology>
    </subcellularLocation>
    <subcellularLocation>
        <location evidence="1">Host endoplasmic reticulum membrane</location>
        <topology evidence="11">Multi-pass membrane protein</topology>
    </subcellularLocation>
    <text evidence="1">ER membrane retention is mediated by the transmembrane domains.</text>
</comment>
<comment type="subcellular location">
    <molecule>Envelope protein E</molecule>
    <subcellularLocation>
        <location evidence="19">Virion membrane</location>
        <topology evidence="1">Multi-pass membrane protein</topology>
    </subcellularLocation>
    <subcellularLocation>
        <location evidence="1">Host endoplasmic reticulum membrane</location>
        <topology evidence="11">Multi-pass membrane protein</topology>
    </subcellularLocation>
    <text evidence="1">ER membrane retention is mediated by the transmembrane domains.</text>
</comment>
<comment type="subcellular location">
    <molecule>Non-structural protein 1</molecule>
    <subcellularLocation>
        <location evidence="6">Secreted</location>
    </subcellularLocation>
    <subcellularLocation>
        <location>Host endoplasmic reticulum membrane</location>
        <topology>Peripheral membrane protein</topology>
        <orientation evidence="6">Lumenal side</orientation>
    </subcellularLocation>
    <text evidence="10">Located in RE-derived vesicles hosting the replication complex.</text>
</comment>
<comment type="subcellular location">
    <molecule>Non-structural protein 2A</molecule>
    <subcellularLocation>
        <location evidence="3">Host endoplasmic reticulum membrane</location>
        <topology evidence="6">Multi-pass membrane protein</topology>
    </subcellularLocation>
</comment>
<comment type="subcellular location">
    <molecule>Serine protease subunit NS2B</molecule>
    <subcellularLocation>
        <location>Host endoplasmic reticulum membrane</location>
        <topology evidence="6">Multi-pass membrane protein</topology>
    </subcellularLocation>
</comment>
<comment type="subcellular location">
    <molecule>Serine protease NS3</molecule>
    <subcellularLocation>
        <location evidence="16">Host endoplasmic reticulum membrane</location>
        <topology evidence="16">Peripheral membrane protein</topology>
        <orientation evidence="16">Cytoplasmic side</orientation>
    </subcellularLocation>
    <text evidence="16">Remains non-covalently associated to serine protease subunit NS2B.</text>
</comment>
<comment type="subcellular location">
    <molecule>Non-structural protein 4A</molecule>
    <subcellularLocation>
        <location evidence="3">Host endoplasmic reticulum membrane</location>
        <topology evidence="6">Multi-pass membrane protein</topology>
    </subcellularLocation>
    <text evidence="6">Located in RE-associated vesicles hosting the replication complex.</text>
</comment>
<comment type="subcellular location">
    <molecule>Non-structural protein 4B</molecule>
    <subcellularLocation>
        <location evidence="6">Host endoplasmic reticulum membrane</location>
        <topology evidence="6">Multi-pass membrane protein</topology>
    </subcellularLocation>
    <text evidence="10">Located in RE-derived vesicles hosting the replication complex.</text>
</comment>
<comment type="subcellular location">
    <molecule>RNA-directed RNA polymerase NS5</molecule>
    <subcellularLocation>
        <location>Host endoplasmic reticulum membrane</location>
        <topology>Peripheral membrane protein</topology>
        <orientation>Cytoplasmic side</orientation>
    </subcellularLocation>
    <subcellularLocation>
        <location evidence="2">Host nucleus</location>
    </subcellularLocation>
    <text evidence="6">Located in RE-associated vesicles hosting the replication complex. NS5 protein is mainly localized in the nucleus rather than in ER vesicles.</text>
</comment>
<comment type="domain">
    <text evidence="6">The transmembrane domains of the small envelope protein M and envelope protein E contain an endoplasmic reticulum retention signal.</text>
</comment>
<comment type="PTM">
    <molecule>Genome polyprotein</molecule>
    <text evidence="6">Specific enzymatic cleavages in vivo yield mature proteins. Cleavages in the lumen of endoplasmic reticulum are performed by host signal peptidase, whereas cleavages in the cytoplasmic side are performed by serine protease NS3. Signal cleavage at the 2K-4B site requires a prior NS3 protease-mediated cleavage at the 4A-2K site.</text>
</comment>
<comment type="PTM">
    <molecule>Protein prM</molecule>
    <text evidence="6">Cleaved in post-Golgi vesicles by a host furin, releasing the mature small envelope protein M, and peptide pr. This cleavage is incomplete as up to 30% of viral particles still carry uncleaved prM.</text>
</comment>
<comment type="PTM">
    <molecule>Envelope protein E</molecule>
    <text evidence="6">N-glycosylated.</text>
</comment>
<comment type="PTM">
    <molecule>Non-structural protein 1</molecule>
    <text evidence="6">N-glycosylated. The excreted form is glycosylated and this is required for efficient secretion of the protein from infected cells.</text>
</comment>
<comment type="PTM">
    <molecule>Serine protease NS3</molecule>
    <text evidence="8">Acetylated by host KAT5. Acetylation modulates NS3 RNA-binding and unwinding activities and plays an important positive role for viral replication.</text>
</comment>
<comment type="PTM">
    <molecule>RNA-directed RNA polymerase NS5</molecule>
    <text evidence="6">Phosphorylated on serines residues. This phosphorylation may trigger NS5 nuclear localization.</text>
</comment>
<comment type="similarity">
    <text evidence="17">In the N-terminal section; belongs to the class I-like SAM-binding methyltransferase superfamily. mRNA cap 0-1 NS5-type methyltransferase family.</text>
</comment>
<sequence>MSKKPGGPGRNRAINMLKRGIPRVFPLVGVKRVVMGLLDGRGPVRFVLALMTFFKFTALAPTKALLGRWKRINKTTAMKHLTSFKKELGTMINVVNNRGTKKKRGNNGPGLVMIITLMTVVSMVSSLKLSNFQGKVMMTINATDMADVIVVPTQHGKNQCWIRAMDVGYMCDDTITYECPKLDAGNDPEDIDCWCDKQPMYVHYGRCTRTRHSKRSRRSIAVQTHGESMLANKKDAWLDSTKASRYLMKTENWIIRNPGYAFVAVLLGWMLGSNNGQRVVFVVLLLLVAPAYSFNCLGMSNRDFLEGVSGATWVDVVLEGDSCITIMAKDKPTIDIKMMETEATNLAEVRSYCYLATVSDVSTVSNCPTTGEAHNPKRAEDTYVCKSGVTDRGWGNGCGLFGKGSIDTCANFTCSLKAMGRMIQPENVKYEVGIFIHGSTSSDTHGNYSSQLGASQAGRFTITPNSPAITVKMGDYGEISVECEPRNGLNTEAYYIMSVGTKHFLVHREWFNDLALPWTSPASSNWRNREILLEFEEPHATKQSVVALGSQEGALHQALAGAVPVSFSGSVKLTSGHLKCRVKMEKLTLKGTTYGMCTEKFSFAKNPADTGHGTVVLELQYTGSDGPCKIPISIVASLSDLTPIGRMVTANPYVASSEANAKVLVEMEPPFGDSYIVVGRGDKQINHHWHKAGSSIGKAFITTIKGAQRLAALGDTAWDFGSVGGIFNSVGKAVHQVFGGAFRTLFGGMSWITQGLMGALLLWMGVNARDRSIALVMLATGGVLLFLATNVHADSGCAIDVGRRELRCGQGIFIHNDVEAWVDRYKFMPETPKQLAKVIEQAHAKGICGLRSVSRLEHVMWENIRDELNTLLRENAVDLSVVVEKPKGMYKSAPQRLALTSEEFEIGWKAWGKSLVFAPELANHTFVVDGPETKECPDAKRAWNSLEIEDFGFGIMSTRVWLKVREHNTTDCDSSIIGTAVKGDIAVHSDLSYWIESHKNTTWRLERAVFGEIKSCTWPETHTLWSDGVVESDLVVPVTLAGPKSNHNRREGYKVQSQGPWDEEDIVLDFDYCPGTTVTITEACGKRGPSIRTTTSSGRLVTDWCCRSCTLPPLRYRTKNGCWYGMEIRPMKHDETTLVKSSVSAHRSDMIDPFQLGLLVMFLATQEVLRKRWTARLTVPAIVGALLVLILGGITYTDLLRYVLLVGAAFAEANSGGDVVHLALIAAFKIQPGFLAMTFLRGKWTNQENILLALGAAFFQMAATDLNFSLPGILNATATAWMLLRAATQPSTSAIVMPLLCLLAPGMRLLYLDTYRITLIIIGICSLIGERRRAAAKKKGAVLLGLALTSTGQFSASVMAAGLMACNPNKKRGWPATEVLTAVGLMFAIVGGLAELDVDSMSIPFVLAGLMAVSYTISGKSTDLWLERAADITWETDAAITGTSQRLDVKLDDDGDFHLINDPGVPWKIWVIRMTALGFAAWTPWAIIPAGIGYWLTVKYAKRGGVFWDTPAPRTYPKGDTSPGVYRIMSRYILGTYQAGVGVMYEGVLHTLWHTTRGAAIRSGEGRLTPYWGSVKEDRITYGGPWKFDRKWNGLDDVQLIIVAPGKAAINIQTKPGIFKTPQGEIGAVSLDYPEGTSGSPILDKNGDIVGLYGNGVILGNGSYVSAIVQGEREEEPVPEAYNADMLRKKQLTVLDLHPGAGKTRRILPQIIKDAIQRRLRTAVLAPTRVVAAEMAEALKGLPVRYLTPAVNREHSGTEIVDVMCHATLTHRLMSPLRAPNYNLFVMDEAHFTDPASIAARGYIATKVELGEAAAIFMTATPPGTHDPFPDTNAPVTDIQAEVPDRAWSSGFEWITEYTGKTVWFVASVKMGNEIAQCLQRAGKKVIQLNRKSYDTEYPKCKNGDWDFVITTDISEMGANFGASRVIDCRKSVKPTILEEGEGRVILSNPSPITSASAAQRRGRVGRNPSQIGDEYHYGGGTSEDDTIAAHWTEAKIMLDNIHLPNGLVAQMYGPERDKAFTMDGEYRLRGEERKTFLELLRTADLPVWLAYKVASNGIQYTDRKWCFDGPRSNIILEDNNEVEIVTRTGERKMLKPRWLDARVYADHQSLKWFKDFAAGKRSAVGFLEVLGRMPEHFAGKTREAFDTMYLVATAEKGGKAHRMALEELPDALETITLIVALAVMTAGVFLLLVQRRGIGKLGLGGMVLGLATFFLWMADVSGTKIAGTLLLALLMMIVLIPEPEKQRSQTDNQLAVFLICVLLVVGVVAANEYGMLERTKSDLGKIFSSTRQPQSALPLPSMNALALDLRPATAWALYGGSTVVLTPLIKHLVTSEYITTSLASISAQAGSLFNLPRGLPFTELDFTVVLVFLGCWGQVSLTTLITAAALATLHYGYMLPGWQAEALRAAQRRTAAGIMKNAVVDGLVATDVPELERTTPLMQKKVGQILLIGVSAAALLVNPCVTTVREAGILISAALLTLWDNGAIAVWNSTTATGLCHVIRGNWLAGASIAWTLIKNADKPACKRGRPGGRTLGEQWKEKLNGLSKEDFLKYRKEAITEVDRSAARKARRDGNKTGGHPVSRGSAKLRWMVERQFVKPIGKVVDLGCGRGGWSYYAATLKGVQEVRGYTKGGPGHEEPMLMQSYGWNLVTMKSGVDVYYKPSEPCDTLFCDIGESSSSAEVEEQRTLRILEMVSDWLQRGPREFCIKVLCPYMPRVMERLEVLQRRYGGGLVRVPLSRNSNHEMYWVSGAAGNIVHAVNMTSQVLIGRMEKRTWHGPKYEEDVNLGSGTRAVGKPQPHTNQEKIKARIQRLKEEYAATWHHDKDHPYRTWTYHGSYEVKPTGSASSLVNGVVRLMSKPWDAILNVTTMAMTDTTPFGQQRVFKEKVDTKAPEPPSGVREVMDETTNWLWAFLAREKKPRLCTREEFKRKVNSNAALGAMFEEQNQWSSAREAVEDPRFWEMVDEERENHLKGECHTCIYNMMGKREKKLGEFGKAKGSRAIWFMWLGARFLEFEALGFLNEDHWLGRKNSGGGVEGLGVQKLGYILREMSHHSGGKMYADDTAGWDTRITRADLDNEAKVLELMEGEHRQLARAIIELTYKHKVVKVMRPGTDGKTVMDVISREDQRGSGQVVTYALNTFTNIAVQLIRLMEAEGVIGQEHLESLPRKTKYAVRTWLFENGEERVTRMAVSGDDCVVKPLDDRFANALHFLNSMSKVRKDVPEWKPSSGWHDWQQVPFCSNHFQELIMKDGRTLVVPCRGQDELIGRARVSPGSGWNVRDTACLAKAYAQMWLLLYFHRRDLRLMANAICSAVPSNWVPTGRTSWSVHATGEWMTTDDMLEVWNKVWIQDNEWMLDKTPVQSWTDIPYTGKREDIWCGSLIGTRTRATWAENIYAAINQVRAIIGQEKYRDYMLSLRRYEEVNVQEDRVL</sequence>
<protein>
    <recommendedName>
        <fullName>Genome polyprotein</fullName>
    </recommendedName>
    <component>
        <recommendedName>
            <fullName>Peptide 2k</fullName>
        </recommendedName>
    </component>
    <component>
        <recommendedName>
            <fullName>Capsid protein C</fullName>
        </recommendedName>
        <alternativeName>
            <fullName>Core protein</fullName>
        </alternativeName>
    </component>
    <component>
        <recommendedName>
            <fullName>Protein prM</fullName>
        </recommendedName>
    </component>
    <component>
        <recommendedName>
            <fullName>Peptide pr</fullName>
        </recommendedName>
    </component>
    <component>
        <recommendedName>
            <fullName>Small envelope protein M</fullName>
        </recommendedName>
        <alternativeName>
            <fullName>Matrix protein</fullName>
        </alternativeName>
    </component>
    <component>
        <recommendedName>
            <fullName>Envelope protein E</fullName>
        </recommendedName>
    </component>
    <component>
        <recommendedName>
            <fullName>Non-structural protein 1</fullName>
            <shortName>NS1</shortName>
        </recommendedName>
    </component>
    <component>
        <recommendedName>
            <fullName>Non-structural protein 2A</fullName>
            <shortName>NS2A</shortName>
        </recommendedName>
    </component>
    <component>
        <recommendedName>
            <fullName>Serine protease subunit NS2B</fullName>
        </recommendedName>
        <alternativeName>
            <fullName>Flavivirin protease NS2B regulatory subunit</fullName>
        </alternativeName>
        <alternativeName>
            <fullName>Non-structural protein 2B</fullName>
        </alternativeName>
    </component>
    <component>
        <recommendedName>
            <fullName>Serine protease NS3</fullName>
            <ecNumber>3.4.21.91</ecNumber>
            <ecNumber>3.6.1.15</ecNumber>
            <ecNumber>3.6.4.13</ecNumber>
        </recommendedName>
        <alternativeName>
            <fullName>Flavivirin protease NS3 catalytic subunit</fullName>
        </alternativeName>
        <alternativeName>
            <fullName>Non-structural protein 3</fullName>
        </alternativeName>
    </component>
    <component>
        <recommendedName>
            <fullName>Non-structural protein 4A</fullName>
            <shortName>NS4A</shortName>
        </recommendedName>
    </component>
    <component>
        <recommendedName>
            <fullName>Non-structural protein 4B</fullName>
            <shortName>NS4B</shortName>
        </recommendedName>
    </component>
    <component>
        <recommendedName>
            <fullName>RNA-directed RNA polymerase NS5</fullName>
            <ecNumber evidence="17">2.1.1.56</ecNumber>
            <ecNumber evidence="17">2.1.1.57</ecNumber>
            <ecNumber evidence="12">2.7.7.48</ecNumber>
        </recommendedName>
        <alternativeName>
            <fullName>Non-structural protein 5</fullName>
        </alternativeName>
    </component>
</protein>
<reference key="1">
    <citation type="journal article" date="2002" name="Emerg. Infect. Dis.">
        <title>Emergence of Usutu virus, an African mosquito-borne flavivirus of the Japanese encephalitis virus group, central Europe.</title>
        <authorList>
            <person name="Weissenbock H."/>
            <person name="Kolodziejek J."/>
            <person name="Url A."/>
            <person name="Lussy H."/>
            <person name="Rebel-Bauder B."/>
            <person name="Nowotny N."/>
        </authorList>
    </citation>
    <scope>NUCLEOTIDE SEQUENCE [LARGE SCALE GENOMIC RNA]</scope>
    <source>
        <strain evidence="20">Vienna 2001</strain>
    </source>
</reference>
<reference key="2">
    <citation type="journal article" date="2004" name="Virology">
        <title>Complete genome analysis and molecular characterization of Usutu virus that emerged in Austria in 2001: comparison with the South African strain SAAR-1776 and other flaviviruses.</title>
        <authorList>
            <person name="Bakonyi T."/>
            <person name="Gould E.A."/>
            <person name="Kolodziejek J."/>
            <person name="Weissenbock H."/>
            <person name="Nowotny N."/>
        </authorList>
    </citation>
    <scope>NUCLEOTIDE SEQUENCE [LARGE SCALE GENOMIC RNA]</scope>
    <source>
        <strain evidence="20">Vienna 2001</strain>
    </source>
</reference>